<protein>
    <recommendedName>
        <fullName evidence="1">dCTP deaminase</fullName>
        <ecNumber evidence="1">3.5.4.13</ecNumber>
    </recommendedName>
    <alternativeName>
        <fullName evidence="1">Deoxycytidine triphosphate deaminase</fullName>
    </alternativeName>
</protein>
<proteinExistence type="inferred from homology"/>
<reference key="1">
    <citation type="journal article" date="2004" name="Nucleic Acids Res.">
        <title>Unique features revealed by the genome sequence of Acinetobacter sp. ADP1, a versatile and naturally transformation competent bacterium.</title>
        <authorList>
            <person name="Barbe V."/>
            <person name="Vallenet D."/>
            <person name="Fonknechten N."/>
            <person name="Kreimeyer A."/>
            <person name="Oztas S."/>
            <person name="Labarre L."/>
            <person name="Cruveiller S."/>
            <person name="Robert C."/>
            <person name="Duprat S."/>
            <person name="Wincker P."/>
            <person name="Ornston L.N."/>
            <person name="Weissenbach J."/>
            <person name="Marliere P."/>
            <person name="Cohen G.N."/>
            <person name="Medigue C."/>
        </authorList>
    </citation>
    <scope>NUCLEOTIDE SEQUENCE [LARGE SCALE GENOMIC DNA]</scope>
    <source>
        <strain>ATCC 33305 / BD413 / ADP1</strain>
    </source>
</reference>
<feature type="chain" id="PRO_1000009667" description="dCTP deaminase">
    <location>
        <begin position="1"/>
        <end position="189"/>
    </location>
</feature>
<feature type="active site" description="Proton donor/acceptor" evidence="1">
    <location>
        <position position="138"/>
    </location>
</feature>
<feature type="binding site" evidence="1">
    <location>
        <begin position="112"/>
        <end position="117"/>
    </location>
    <ligand>
        <name>dCTP</name>
        <dbReference type="ChEBI" id="CHEBI:61481"/>
    </ligand>
</feature>
<feature type="binding site" evidence="1">
    <location>
        <begin position="136"/>
        <end position="138"/>
    </location>
    <ligand>
        <name>dCTP</name>
        <dbReference type="ChEBI" id="CHEBI:61481"/>
    </ligand>
</feature>
<feature type="binding site" evidence="1">
    <location>
        <position position="157"/>
    </location>
    <ligand>
        <name>dCTP</name>
        <dbReference type="ChEBI" id="CHEBI:61481"/>
    </ligand>
</feature>
<feature type="binding site" evidence="1">
    <location>
        <position position="171"/>
    </location>
    <ligand>
        <name>dCTP</name>
        <dbReference type="ChEBI" id="CHEBI:61481"/>
    </ligand>
</feature>
<feature type="binding site" evidence="1">
    <location>
        <position position="181"/>
    </location>
    <ligand>
        <name>dCTP</name>
        <dbReference type="ChEBI" id="CHEBI:61481"/>
    </ligand>
</feature>
<keyword id="KW-0378">Hydrolase</keyword>
<keyword id="KW-0546">Nucleotide metabolism</keyword>
<keyword id="KW-0547">Nucleotide-binding</keyword>
<organism>
    <name type="scientific">Acinetobacter baylyi (strain ATCC 33305 / BD413 / ADP1)</name>
    <dbReference type="NCBI Taxonomy" id="62977"/>
    <lineage>
        <taxon>Bacteria</taxon>
        <taxon>Pseudomonadati</taxon>
        <taxon>Pseudomonadota</taxon>
        <taxon>Gammaproteobacteria</taxon>
        <taxon>Moraxellales</taxon>
        <taxon>Moraxellaceae</taxon>
        <taxon>Acinetobacter</taxon>
    </lineage>
</organism>
<sequence length="189" mass="21303">MAIKSDRWIREMSEKHGMIEPYAENQVRFNAQGEKLISYGVSSYGYDVRCAPEFKVFTNVHSAIVDPKNFDEKSFIDIHSDVCIIPPNSFALARTVEYFRIPRNVLTVCLGKSTYARCGIIVNVTPLEPEWEGHVTLEFSNTTNLPARIYAGEGVAQMLFFESDEVCETSYKDRGGKYQGQTGVTLPKA</sequence>
<accession>Q6FE29</accession>
<name>DCD_ACIAD</name>
<dbReference type="EC" id="3.5.4.13" evidence="1"/>
<dbReference type="EMBL" id="CR543861">
    <property type="protein sequence ID" value="CAG67679.1"/>
    <property type="molecule type" value="Genomic_DNA"/>
</dbReference>
<dbReference type="RefSeq" id="WP_004922407.1">
    <property type="nucleotide sequence ID" value="NC_005966.1"/>
</dbReference>
<dbReference type="SMR" id="Q6FE29"/>
<dbReference type="STRING" id="202950.GCA_001485005_02530"/>
<dbReference type="GeneID" id="45233239"/>
<dbReference type="KEGG" id="aci:ACIAD0776"/>
<dbReference type="eggNOG" id="COG0717">
    <property type="taxonomic scope" value="Bacteria"/>
</dbReference>
<dbReference type="HOGENOM" id="CLU_087476_4_0_6"/>
<dbReference type="OrthoDB" id="9780956at2"/>
<dbReference type="BioCyc" id="ASP62977:ACIAD_RS03555-MONOMER"/>
<dbReference type="UniPathway" id="UPA00610">
    <property type="reaction ID" value="UER00665"/>
</dbReference>
<dbReference type="Proteomes" id="UP000000430">
    <property type="component" value="Chromosome"/>
</dbReference>
<dbReference type="GO" id="GO:0008829">
    <property type="term" value="F:dCTP deaminase activity"/>
    <property type="evidence" value="ECO:0007669"/>
    <property type="project" value="UniProtKB-UniRule"/>
</dbReference>
<dbReference type="GO" id="GO:0000166">
    <property type="term" value="F:nucleotide binding"/>
    <property type="evidence" value="ECO:0007669"/>
    <property type="project" value="UniProtKB-KW"/>
</dbReference>
<dbReference type="GO" id="GO:0006226">
    <property type="term" value="P:dUMP biosynthetic process"/>
    <property type="evidence" value="ECO:0007669"/>
    <property type="project" value="UniProtKB-UniPathway"/>
</dbReference>
<dbReference type="GO" id="GO:0006229">
    <property type="term" value="P:dUTP biosynthetic process"/>
    <property type="evidence" value="ECO:0007669"/>
    <property type="project" value="UniProtKB-UniRule"/>
</dbReference>
<dbReference type="GO" id="GO:0015949">
    <property type="term" value="P:nucleobase-containing small molecule interconversion"/>
    <property type="evidence" value="ECO:0007669"/>
    <property type="project" value="TreeGrafter"/>
</dbReference>
<dbReference type="CDD" id="cd07557">
    <property type="entry name" value="trimeric_dUTPase"/>
    <property type="match status" value="1"/>
</dbReference>
<dbReference type="FunFam" id="2.70.40.10:FF:000001">
    <property type="entry name" value="dCTP deaminase"/>
    <property type="match status" value="1"/>
</dbReference>
<dbReference type="Gene3D" id="2.70.40.10">
    <property type="match status" value="1"/>
</dbReference>
<dbReference type="HAMAP" id="MF_00146">
    <property type="entry name" value="dCTP_deaminase"/>
    <property type="match status" value="1"/>
</dbReference>
<dbReference type="InterPro" id="IPR011962">
    <property type="entry name" value="dCTP_deaminase"/>
</dbReference>
<dbReference type="InterPro" id="IPR036157">
    <property type="entry name" value="dUTPase-like_sf"/>
</dbReference>
<dbReference type="InterPro" id="IPR033704">
    <property type="entry name" value="dUTPase_trimeric"/>
</dbReference>
<dbReference type="NCBIfam" id="TIGR02274">
    <property type="entry name" value="dCTP_deam"/>
    <property type="match status" value="1"/>
</dbReference>
<dbReference type="PANTHER" id="PTHR42680">
    <property type="entry name" value="DCTP DEAMINASE"/>
    <property type="match status" value="1"/>
</dbReference>
<dbReference type="PANTHER" id="PTHR42680:SF3">
    <property type="entry name" value="DCTP DEAMINASE"/>
    <property type="match status" value="1"/>
</dbReference>
<dbReference type="Pfam" id="PF22769">
    <property type="entry name" value="DCD"/>
    <property type="match status" value="1"/>
</dbReference>
<dbReference type="SUPFAM" id="SSF51283">
    <property type="entry name" value="dUTPase-like"/>
    <property type="match status" value="1"/>
</dbReference>
<gene>
    <name evidence="1" type="primary">dcd</name>
    <name type="ordered locus">ACIAD0776</name>
</gene>
<comment type="function">
    <text evidence="1">Catalyzes the deamination of dCTP to dUTP.</text>
</comment>
<comment type="catalytic activity">
    <reaction evidence="1">
        <text>dCTP + H2O + H(+) = dUTP + NH4(+)</text>
        <dbReference type="Rhea" id="RHEA:22680"/>
        <dbReference type="ChEBI" id="CHEBI:15377"/>
        <dbReference type="ChEBI" id="CHEBI:15378"/>
        <dbReference type="ChEBI" id="CHEBI:28938"/>
        <dbReference type="ChEBI" id="CHEBI:61481"/>
        <dbReference type="ChEBI" id="CHEBI:61555"/>
        <dbReference type="EC" id="3.5.4.13"/>
    </reaction>
</comment>
<comment type="pathway">
    <text evidence="1">Pyrimidine metabolism; dUMP biosynthesis; dUMP from dCTP (dUTP route): step 1/2.</text>
</comment>
<comment type="subunit">
    <text evidence="1">Homotrimer.</text>
</comment>
<comment type="similarity">
    <text evidence="1">Belongs to the dCTP deaminase family.</text>
</comment>
<evidence type="ECO:0000255" key="1">
    <source>
        <dbReference type="HAMAP-Rule" id="MF_00146"/>
    </source>
</evidence>